<comment type="function">
    <text evidence="1">Involved in the biosynthesis of the chorismate, which leads to the biosynthesis of aromatic amino acids. Catalyzes the reversible NADPH linked reduction of 3-dehydroshikimate (DHSA) to yield shikimate (SA).</text>
</comment>
<comment type="catalytic activity">
    <reaction evidence="1">
        <text>shikimate + NADP(+) = 3-dehydroshikimate + NADPH + H(+)</text>
        <dbReference type="Rhea" id="RHEA:17737"/>
        <dbReference type="ChEBI" id="CHEBI:15378"/>
        <dbReference type="ChEBI" id="CHEBI:16630"/>
        <dbReference type="ChEBI" id="CHEBI:36208"/>
        <dbReference type="ChEBI" id="CHEBI:57783"/>
        <dbReference type="ChEBI" id="CHEBI:58349"/>
        <dbReference type="EC" id="1.1.1.25"/>
    </reaction>
</comment>
<comment type="pathway">
    <text evidence="1">Metabolic intermediate biosynthesis; chorismate biosynthesis; chorismate from D-erythrose 4-phosphate and phosphoenolpyruvate: step 4/7.</text>
</comment>
<comment type="subunit">
    <text evidence="1">Homodimer.</text>
</comment>
<comment type="similarity">
    <text evidence="1">Belongs to the shikimate dehydrogenase family.</text>
</comment>
<dbReference type="EC" id="1.1.1.25" evidence="1"/>
<dbReference type="EMBL" id="CP000308">
    <property type="protein sequence ID" value="ABG15188.1"/>
    <property type="molecule type" value="Genomic_DNA"/>
</dbReference>
<dbReference type="RefSeq" id="WP_002209026.1">
    <property type="nucleotide sequence ID" value="NZ_CP009906.1"/>
</dbReference>
<dbReference type="SMR" id="Q1C2Y4"/>
<dbReference type="GeneID" id="57974357"/>
<dbReference type="KEGG" id="ypa:YPA_3226"/>
<dbReference type="UniPathway" id="UPA00053">
    <property type="reaction ID" value="UER00087"/>
</dbReference>
<dbReference type="Proteomes" id="UP000001971">
    <property type="component" value="Chromosome"/>
</dbReference>
<dbReference type="GO" id="GO:0005829">
    <property type="term" value="C:cytosol"/>
    <property type="evidence" value="ECO:0007669"/>
    <property type="project" value="TreeGrafter"/>
</dbReference>
<dbReference type="GO" id="GO:0050661">
    <property type="term" value="F:NADP binding"/>
    <property type="evidence" value="ECO:0007669"/>
    <property type="project" value="InterPro"/>
</dbReference>
<dbReference type="GO" id="GO:0004764">
    <property type="term" value="F:shikimate 3-dehydrogenase (NADP+) activity"/>
    <property type="evidence" value="ECO:0007669"/>
    <property type="project" value="UniProtKB-UniRule"/>
</dbReference>
<dbReference type="GO" id="GO:0008652">
    <property type="term" value="P:amino acid biosynthetic process"/>
    <property type="evidence" value="ECO:0007669"/>
    <property type="project" value="UniProtKB-KW"/>
</dbReference>
<dbReference type="GO" id="GO:0009073">
    <property type="term" value="P:aromatic amino acid family biosynthetic process"/>
    <property type="evidence" value="ECO:0007669"/>
    <property type="project" value="UniProtKB-KW"/>
</dbReference>
<dbReference type="GO" id="GO:0009423">
    <property type="term" value="P:chorismate biosynthetic process"/>
    <property type="evidence" value="ECO:0007669"/>
    <property type="project" value="UniProtKB-UniRule"/>
</dbReference>
<dbReference type="GO" id="GO:0019632">
    <property type="term" value="P:shikimate metabolic process"/>
    <property type="evidence" value="ECO:0007669"/>
    <property type="project" value="InterPro"/>
</dbReference>
<dbReference type="CDD" id="cd01065">
    <property type="entry name" value="NAD_bind_Shikimate_DH"/>
    <property type="match status" value="1"/>
</dbReference>
<dbReference type="FunFam" id="3.40.50.10860:FF:000006">
    <property type="entry name" value="Shikimate dehydrogenase (NADP(+))"/>
    <property type="match status" value="1"/>
</dbReference>
<dbReference type="FunFam" id="3.40.50.720:FF:000104">
    <property type="entry name" value="Shikimate dehydrogenase (NADP(+))"/>
    <property type="match status" value="1"/>
</dbReference>
<dbReference type="Gene3D" id="3.40.50.10860">
    <property type="entry name" value="Leucine Dehydrogenase, chain A, domain 1"/>
    <property type="match status" value="1"/>
</dbReference>
<dbReference type="Gene3D" id="3.40.50.720">
    <property type="entry name" value="NAD(P)-binding Rossmann-like Domain"/>
    <property type="match status" value="1"/>
</dbReference>
<dbReference type="HAMAP" id="MF_00222">
    <property type="entry name" value="Shikimate_DH_AroE"/>
    <property type="match status" value="1"/>
</dbReference>
<dbReference type="InterPro" id="IPR046346">
    <property type="entry name" value="Aminoacid_DH-like_N_sf"/>
</dbReference>
<dbReference type="InterPro" id="IPR036291">
    <property type="entry name" value="NAD(P)-bd_dom_sf"/>
</dbReference>
<dbReference type="InterPro" id="IPR041121">
    <property type="entry name" value="SDH_C"/>
</dbReference>
<dbReference type="InterPro" id="IPR011342">
    <property type="entry name" value="Shikimate_DH"/>
</dbReference>
<dbReference type="InterPro" id="IPR013708">
    <property type="entry name" value="Shikimate_DH-bd_N"/>
</dbReference>
<dbReference type="InterPro" id="IPR022893">
    <property type="entry name" value="Shikimate_DH_fam"/>
</dbReference>
<dbReference type="InterPro" id="IPR006151">
    <property type="entry name" value="Shikm_DH/Glu-tRNA_Rdtase"/>
</dbReference>
<dbReference type="NCBIfam" id="TIGR00507">
    <property type="entry name" value="aroE"/>
    <property type="match status" value="1"/>
</dbReference>
<dbReference type="NCBIfam" id="NF001310">
    <property type="entry name" value="PRK00258.1-2"/>
    <property type="match status" value="1"/>
</dbReference>
<dbReference type="PANTHER" id="PTHR21089:SF1">
    <property type="entry name" value="BIFUNCTIONAL 3-DEHYDROQUINATE DEHYDRATASE_SHIKIMATE DEHYDROGENASE, CHLOROPLASTIC"/>
    <property type="match status" value="1"/>
</dbReference>
<dbReference type="PANTHER" id="PTHR21089">
    <property type="entry name" value="SHIKIMATE DEHYDROGENASE"/>
    <property type="match status" value="1"/>
</dbReference>
<dbReference type="Pfam" id="PF18317">
    <property type="entry name" value="SDH_C"/>
    <property type="match status" value="1"/>
</dbReference>
<dbReference type="Pfam" id="PF01488">
    <property type="entry name" value="Shikimate_DH"/>
    <property type="match status" value="1"/>
</dbReference>
<dbReference type="Pfam" id="PF08501">
    <property type="entry name" value="Shikimate_dh_N"/>
    <property type="match status" value="1"/>
</dbReference>
<dbReference type="SUPFAM" id="SSF53223">
    <property type="entry name" value="Aminoacid dehydrogenase-like, N-terminal domain"/>
    <property type="match status" value="1"/>
</dbReference>
<dbReference type="SUPFAM" id="SSF51735">
    <property type="entry name" value="NAD(P)-binding Rossmann-fold domains"/>
    <property type="match status" value="1"/>
</dbReference>
<feature type="chain" id="PRO_1000021365" description="Shikimate dehydrogenase (NADP(+))">
    <location>
        <begin position="1"/>
        <end position="273"/>
    </location>
</feature>
<feature type="active site" description="Proton acceptor" evidence="1">
    <location>
        <position position="66"/>
    </location>
</feature>
<feature type="binding site" evidence="1">
    <location>
        <begin position="15"/>
        <end position="17"/>
    </location>
    <ligand>
        <name>shikimate</name>
        <dbReference type="ChEBI" id="CHEBI:36208"/>
    </ligand>
</feature>
<feature type="binding site" evidence="1">
    <location>
        <position position="62"/>
    </location>
    <ligand>
        <name>shikimate</name>
        <dbReference type="ChEBI" id="CHEBI:36208"/>
    </ligand>
</feature>
<feature type="binding site" evidence="1">
    <location>
        <position position="78"/>
    </location>
    <ligand>
        <name>NADP(+)</name>
        <dbReference type="ChEBI" id="CHEBI:58349"/>
    </ligand>
</feature>
<feature type="binding site" evidence="1">
    <location>
        <position position="87"/>
    </location>
    <ligand>
        <name>shikimate</name>
        <dbReference type="ChEBI" id="CHEBI:36208"/>
    </ligand>
</feature>
<feature type="binding site" evidence="1">
    <location>
        <position position="103"/>
    </location>
    <ligand>
        <name>shikimate</name>
        <dbReference type="ChEBI" id="CHEBI:36208"/>
    </ligand>
</feature>
<feature type="binding site" evidence="1">
    <location>
        <begin position="127"/>
        <end position="131"/>
    </location>
    <ligand>
        <name>NADP(+)</name>
        <dbReference type="ChEBI" id="CHEBI:58349"/>
    </ligand>
</feature>
<feature type="binding site" evidence="1">
    <location>
        <begin position="150"/>
        <end position="155"/>
    </location>
    <ligand>
        <name>NADP(+)</name>
        <dbReference type="ChEBI" id="CHEBI:58349"/>
    </ligand>
</feature>
<feature type="binding site" evidence="1">
    <location>
        <position position="218"/>
    </location>
    <ligand>
        <name>NADP(+)</name>
        <dbReference type="ChEBI" id="CHEBI:58349"/>
    </ligand>
</feature>
<feature type="binding site" evidence="1">
    <location>
        <position position="238"/>
    </location>
    <ligand>
        <name>NADP(+)</name>
        <dbReference type="ChEBI" id="CHEBI:58349"/>
    </ligand>
</feature>
<reference key="1">
    <citation type="journal article" date="2006" name="J. Bacteriol.">
        <title>Complete genome sequence of Yersinia pestis strains Antiqua and Nepal516: evidence of gene reduction in an emerging pathogen.</title>
        <authorList>
            <person name="Chain P.S.G."/>
            <person name="Hu P."/>
            <person name="Malfatti S.A."/>
            <person name="Radnedge L."/>
            <person name="Larimer F."/>
            <person name="Vergez L.M."/>
            <person name="Worsham P."/>
            <person name="Chu M.C."/>
            <person name="Andersen G.L."/>
        </authorList>
    </citation>
    <scope>NUCLEOTIDE SEQUENCE [LARGE SCALE GENOMIC DNA]</scope>
    <source>
        <strain>Antiqua</strain>
    </source>
</reference>
<protein>
    <recommendedName>
        <fullName evidence="1">Shikimate dehydrogenase (NADP(+))</fullName>
        <shortName evidence="1">SDH</shortName>
        <ecNumber evidence="1">1.1.1.25</ecNumber>
    </recommendedName>
</protein>
<evidence type="ECO:0000255" key="1">
    <source>
        <dbReference type="HAMAP-Rule" id="MF_00222"/>
    </source>
</evidence>
<name>AROE_YERPA</name>
<gene>
    <name evidence="1" type="primary">aroE</name>
    <name type="ordered locus">YPA_3226</name>
</gene>
<keyword id="KW-0028">Amino-acid biosynthesis</keyword>
<keyword id="KW-0057">Aromatic amino acid biosynthesis</keyword>
<keyword id="KW-0521">NADP</keyword>
<keyword id="KW-0560">Oxidoreductase</keyword>
<proteinExistence type="inferred from homology"/>
<accession>Q1C2Y4</accession>
<organism>
    <name type="scientific">Yersinia pestis bv. Antiqua (strain Antiqua)</name>
    <dbReference type="NCBI Taxonomy" id="360102"/>
    <lineage>
        <taxon>Bacteria</taxon>
        <taxon>Pseudomonadati</taxon>
        <taxon>Pseudomonadota</taxon>
        <taxon>Gammaproteobacteria</taxon>
        <taxon>Enterobacterales</taxon>
        <taxon>Yersiniaceae</taxon>
        <taxon>Yersinia</taxon>
    </lineage>
</organism>
<sequence>MDQKFAVFGNPISHSKSPRIHTLFSEQTGIEHRYGKVLAPSEAFENTLVSFFADGAQGANITTPFKERAYDQCDELTDRASLAGAVNTIKRLEDGRLLGDNTDGIGLLSDLERQNLIRTTDHILLVGAGGAARGVILPLLSYGCTVVVTNRTHTRAQQLAKVFNHIGDIDVCEMSELAGQRFDLVINATASGLHGEVPNLPAAILTSQTRCYDMFYQAGTTPFLAWAQRLGLADYADGLGMLVGQAAHAFKLWHGVMPEITPVLAQLRSELGK</sequence>